<evidence type="ECO:0000255" key="1">
    <source>
        <dbReference type="HAMAP-Rule" id="MF_01010"/>
    </source>
</evidence>
<evidence type="ECO:0000305" key="2"/>
<accession>Q3BVV1</accession>
<sequence length="444" mass="49394">MARTRNRLDRTPFQTAVTDLSHDGRGVARRDGEGGKVTFISGALPGELVRAEPTARSRHFDEAKTVEVLEASPQRVTPRCPHFGVCAGCVLQHLEESQQIVAKQRVLMDNLERIGHVTPQAVLPALTGDNWGYRRKGRFSVRRVEKKDKTLVGFRELDPRFVADLSICYTVIPQIGEKIPLFAALIEGMDGKRDIPQIEFIAGDDAVALTIRHMQPLSERDRQAWVAFAQEHGFAIFLQPGGVDSVHPLWPQDVPLSFRLPQWEVELAFRPLDFIQVNASLNQKMIAHAVALLEAKPDDRVLDLFCGLGNFTLPLARVVREVVGVEGDAGLVARAKENAQRNGLDNAQFHAADLTQDQRSAPWMRQGFDKLLLDPPRSGALEVLQQLPLKTFDRIVYVSCHPGSLARDAGYLVNDQGFTLVCAGAMDMFPHTAHVESIAVFERR</sequence>
<gene>
    <name evidence="1" type="primary">rlmD</name>
    <name type="synonym">rumA</name>
    <name type="ordered locus">XCV1381</name>
</gene>
<reference key="1">
    <citation type="journal article" date="2005" name="J. Bacteriol.">
        <title>Insights into genome plasticity and pathogenicity of the plant pathogenic Bacterium Xanthomonas campestris pv. vesicatoria revealed by the complete genome sequence.</title>
        <authorList>
            <person name="Thieme F."/>
            <person name="Koebnik R."/>
            <person name="Bekel T."/>
            <person name="Berger C."/>
            <person name="Boch J."/>
            <person name="Buettner D."/>
            <person name="Caldana C."/>
            <person name="Gaigalat L."/>
            <person name="Goesmann A."/>
            <person name="Kay S."/>
            <person name="Kirchner O."/>
            <person name="Lanz C."/>
            <person name="Linke B."/>
            <person name="McHardy A.C."/>
            <person name="Meyer F."/>
            <person name="Mittenhuber G."/>
            <person name="Nies D.H."/>
            <person name="Niesbach-Kloesgen U."/>
            <person name="Patschkowski T."/>
            <person name="Rueckert C."/>
            <person name="Rupp O."/>
            <person name="Schneiker S."/>
            <person name="Schuster S.C."/>
            <person name="Vorhoelter F.J."/>
            <person name="Weber E."/>
            <person name="Puehler A."/>
            <person name="Bonas U."/>
            <person name="Bartels D."/>
            <person name="Kaiser O."/>
        </authorList>
    </citation>
    <scope>NUCLEOTIDE SEQUENCE [LARGE SCALE GENOMIC DNA]</scope>
    <source>
        <strain>85-10</strain>
    </source>
</reference>
<keyword id="KW-0004">4Fe-4S</keyword>
<keyword id="KW-0408">Iron</keyword>
<keyword id="KW-0411">Iron-sulfur</keyword>
<keyword id="KW-0479">Metal-binding</keyword>
<keyword id="KW-0489">Methyltransferase</keyword>
<keyword id="KW-0698">rRNA processing</keyword>
<keyword id="KW-0949">S-adenosyl-L-methionine</keyword>
<keyword id="KW-0808">Transferase</keyword>
<name>RLMD_XANE5</name>
<proteinExistence type="inferred from homology"/>
<organism>
    <name type="scientific">Xanthomonas euvesicatoria pv. vesicatoria (strain 85-10)</name>
    <name type="common">Xanthomonas campestris pv. vesicatoria</name>
    <dbReference type="NCBI Taxonomy" id="316273"/>
    <lineage>
        <taxon>Bacteria</taxon>
        <taxon>Pseudomonadati</taxon>
        <taxon>Pseudomonadota</taxon>
        <taxon>Gammaproteobacteria</taxon>
        <taxon>Lysobacterales</taxon>
        <taxon>Lysobacteraceae</taxon>
        <taxon>Xanthomonas</taxon>
    </lineage>
</organism>
<comment type="function">
    <text evidence="1">Catalyzes the formation of 5-methyl-uridine at position 1939 (m5U1939) in 23S rRNA.</text>
</comment>
<comment type="catalytic activity">
    <reaction evidence="1">
        <text>uridine(1939) in 23S rRNA + S-adenosyl-L-methionine = 5-methyluridine(1939) in 23S rRNA + S-adenosyl-L-homocysteine + H(+)</text>
        <dbReference type="Rhea" id="RHEA:42908"/>
        <dbReference type="Rhea" id="RHEA-COMP:10278"/>
        <dbReference type="Rhea" id="RHEA-COMP:10279"/>
        <dbReference type="ChEBI" id="CHEBI:15378"/>
        <dbReference type="ChEBI" id="CHEBI:57856"/>
        <dbReference type="ChEBI" id="CHEBI:59789"/>
        <dbReference type="ChEBI" id="CHEBI:65315"/>
        <dbReference type="ChEBI" id="CHEBI:74447"/>
        <dbReference type="EC" id="2.1.1.190"/>
    </reaction>
</comment>
<comment type="similarity">
    <text evidence="1">Belongs to the class I-like SAM-binding methyltransferase superfamily. RNA M5U methyltransferase family. RlmD subfamily.</text>
</comment>
<comment type="sequence caution" evidence="2">
    <conflict type="erroneous initiation">
        <sequence resource="EMBL-CDS" id="CAJ23012"/>
    </conflict>
</comment>
<feature type="chain" id="PRO_0000229889" description="23S rRNA (uracil(1939)-C(5))-methyltransferase RlmD">
    <location>
        <begin position="1"/>
        <end position="444"/>
    </location>
</feature>
<feature type="domain" description="TRAM" evidence="1">
    <location>
        <begin position="5"/>
        <end position="67"/>
    </location>
</feature>
<feature type="active site" description="Nucleophile" evidence="1">
    <location>
        <position position="400"/>
    </location>
</feature>
<feature type="binding site" evidence="1">
    <location>
        <position position="80"/>
    </location>
    <ligand>
        <name>[4Fe-4S] cluster</name>
        <dbReference type="ChEBI" id="CHEBI:49883"/>
    </ligand>
</feature>
<feature type="binding site" evidence="1">
    <location>
        <position position="86"/>
    </location>
    <ligand>
        <name>[4Fe-4S] cluster</name>
        <dbReference type="ChEBI" id="CHEBI:49883"/>
    </ligand>
</feature>
<feature type="binding site" evidence="1">
    <location>
        <position position="89"/>
    </location>
    <ligand>
        <name>[4Fe-4S] cluster</name>
        <dbReference type="ChEBI" id="CHEBI:49883"/>
    </ligand>
</feature>
<feature type="binding site" evidence="1">
    <location>
        <position position="168"/>
    </location>
    <ligand>
        <name>[4Fe-4S] cluster</name>
        <dbReference type="ChEBI" id="CHEBI:49883"/>
    </ligand>
</feature>
<feature type="binding site" evidence="1">
    <location>
        <position position="276"/>
    </location>
    <ligand>
        <name>S-adenosyl-L-methionine</name>
        <dbReference type="ChEBI" id="CHEBI:59789"/>
    </ligand>
</feature>
<feature type="binding site" evidence="1">
    <location>
        <position position="305"/>
    </location>
    <ligand>
        <name>S-adenosyl-L-methionine</name>
        <dbReference type="ChEBI" id="CHEBI:59789"/>
    </ligand>
</feature>
<feature type="binding site" evidence="1">
    <location>
        <position position="310"/>
    </location>
    <ligand>
        <name>S-adenosyl-L-methionine</name>
        <dbReference type="ChEBI" id="CHEBI:59789"/>
    </ligand>
</feature>
<feature type="binding site" evidence="1">
    <location>
        <position position="326"/>
    </location>
    <ligand>
        <name>S-adenosyl-L-methionine</name>
        <dbReference type="ChEBI" id="CHEBI:59789"/>
    </ligand>
</feature>
<feature type="binding site" evidence="1">
    <location>
        <position position="353"/>
    </location>
    <ligand>
        <name>S-adenosyl-L-methionine</name>
        <dbReference type="ChEBI" id="CHEBI:59789"/>
    </ligand>
</feature>
<feature type="binding site" evidence="1">
    <location>
        <position position="374"/>
    </location>
    <ligand>
        <name>S-adenosyl-L-methionine</name>
        <dbReference type="ChEBI" id="CHEBI:59789"/>
    </ligand>
</feature>
<protein>
    <recommendedName>
        <fullName evidence="1">23S rRNA (uracil(1939)-C(5))-methyltransferase RlmD</fullName>
        <ecNumber evidence="1">2.1.1.190</ecNumber>
    </recommendedName>
    <alternativeName>
        <fullName evidence="1">23S rRNA(m5U1939)-methyltransferase</fullName>
    </alternativeName>
</protein>
<dbReference type="EC" id="2.1.1.190" evidence="1"/>
<dbReference type="EMBL" id="AM039952">
    <property type="protein sequence ID" value="CAJ23012.1"/>
    <property type="status" value="ALT_INIT"/>
    <property type="molecule type" value="Genomic_DNA"/>
</dbReference>
<dbReference type="RefSeq" id="WP_039416713.1">
    <property type="nucleotide sequence ID" value="NZ_CP017190.1"/>
</dbReference>
<dbReference type="SMR" id="Q3BVV1"/>
<dbReference type="STRING" id="456327.BJD11_15755"/>
<dbReference type="KEGG" id="xcv:XCV1381"/>
<dbReference type="eggNOG" id="COG2265">
    <property type="taxonomic scope" value="Bacteria"/>
</dbReference>
<dbReference type="HOGENOM" id="CLU_014689_8_2_6"/>
<dbReference type="Proteomes" id="UP000007069">
    <property type="component" value="Chromosome"/>
</dbReference>
<dbReference type="GO" id="GO:0051539">
    <property type="term" value="F:4 iron, 4 sulfur cluster binding"/>
    <property type="evidence" value="ECO:0007669"/>
    <property type="project" value="UniProtKB-KW"/>
</dbReference>
<dbReference type="GO" id="GO:0005506">
    <property type="term" value="F:iron ion binding"/>
    <property type="evidence" value="ECO:0007669"/>
    <property type="project" value="UniProtKB-UniRule"/>
</dbReference>
<dbReference type="GO" id="GO:0003723">
    <property type="term" value="F:RNA binding"/>
    <property type="evidence" value="ECO:0007669"/>
    <property type="project" value="InterPro"/>
</dbReference>
<dbReference type="GO" id="GO:0070041">
    <property type="term" value="F:rRNA (uridine-C5-)-methyltransferase activity"/>
    <property type="evidence" value="ECO:0007669"/>
    <property type="project" value="UniProtKB-UniRule"/>
</dbReference>
<dbReference type="GO" id="GO:0070475">
    <property type="term" value="P:rRNA base methylation"/>
    <property type="evidence" value="ECO:0007669"/>
    <property type="project" value="TreeGrafter"/>
</dbReference>
<dbReference type="CDD" id="cd02440">
    <property type="entry name" value="AdoMet_MTases"/>
    <property type="match status" value="1"/>
</dbReference>
<dbReference type="FunFam" id="3.40.50.150:FF:000009">
    <property type="entry name" value="23S rRNA (Uracil(1939)-C(5))-methyltransferase RlmD"/>
    <property type="match status" value="1"/>
</dbReference>
<dbReference type="FunFam" id="2.40.50.1070:FF:000006">
    <property type="entry name" value="23S rRNA (uracil(1939)-C(5))-methyltransferase RlmD"/>
    <property type="match status" value="1"/>
</dbReference>
<dbReference type="FunFam" id="2.40.50.140:FF:000097">
    <property type="entry name" value="23S rRNA (uracil(1939)-C(5))-methyltransferase RlmD"/>
    <property type="match status" value="1"/>
</dbReference>
<dbReference type="Gene3D" id="2.40.50.1070">
    <property type="match status" value="1"/>
</dbReference>
<dbReference type="Gene3D" id="2.40.50.140">
    <property type="entry name" value="Nucleic acid-binding proteins"/>
    <property type="match status" value="1"/>
</dbReference>
<dbReference type="Gene3D" id="3.40.50.150">
    <property type="entry name" value="Vaccinia Virus protein VP39"/>
    <property type="match status" value="1"/>
</dbReference>
<dbReference type="HAMAP" id="MF_01010">
    <property type="entry name" value="23SrRNA_methyltr_RlmD"/>
    <property type="match status" value="1"/>
</dbReference>
<dbReference type="InterPro" id="IPR001566">
    <property type="entry name" value="23S_rRNA_MeTrfase_RlmD"/>
</dbReference>
<dbReference type="InterPro" id="IPR030390">
    <property type="entry name" value="MeTrfase_TrmA_AS"/>
</dbReference>
<dbReference type="InterPro" id="IPR030391">
    <property type="entry name" value="MeTrfase_TrmA_CS"/>
</dbReference>
<dbReference type="InterPro" id="IPR012340">
    <property type="entry name" value="NA-bd_OB-fold"/>
</dbReference>
<dbReference type="InterPro" id="IPR029063">
    <property type="entry name" value="SAM-dependent_MTases_sf"/>
</dbReference>
<dbReference type="InterPro" id="IPR002792">
    <property type="entry name" value="TRAM_dom"/>
</dbReference>
<dbReference type="InterPro" id="IPR010280">
    <property type="entry name" value="U5_MeTrfase_fam"/>
</dbReference>
<dbReference type="NCBIfam" id="NF009639">
    <property type="entry name" value="PRK13168.1"/>
    <property type="match status" value="1"/>
</dbReference>
<dbReference type="NCBIfam" id="TIGR00479">
    <property type="entry name" value="rumA"/>
    <property type="match status" value="1"/>
</dbReference>
<dbReference type="PANTHER" id="PTHR11061:SF49">
    <property type="entry name" value="23S RRNA (URACIL(1939)-C(5))-METHYLTRANSFERASE RLMD"/>
    <property type="match status" value="1"/>
</dbReference>
<dbReference type="PANTHER" id="PTHR11061">
    <property type="entry name" value="RNA M5U METHYLTRANSFERASE"/>
    <property type="match status" value="1"/>
</dbReference>
<dbReference type="Pfam" id="PF05958">
    <property type="entry name" value="tRNA_U5-meth_tr"/>
    <property type="match status" value="1"/>
</dbReference>
<dbReference type="SUPFAM" id="SSF50249">
    <property type="entry name" value="Nucleic acid-binding proteins"/>
    <property type="match status" value="1"/>
</dbReference>
<dbReference type="SUPFAM" id="SSF53335">
    <property type="entry name" value="S-adenosyl-L-methionine-dependent methyltransferases"/>
    <property type="match status" value="1"/>
</dbReference>
<dbReference type="PROSITE" id="PS51687">
    <property type="entry name" value="SAM_MT_RNA_M5U"/>
    <property type="match status" value="1"/>
</dbReference>
<dbReference type="PROSITE" id="PS50926">
    <property type="entry name" value="TRAM"/>
    <property type="match status" value="1"/>
</dbReference>
<dbReference type="PROSITE" id="PS01230">
    <property type="entry name" value="TRMA_1"/>
    <property type="match status" value="1"/>
</dbReference>
<dbReference type="PROSITE" id="PS01231">
    <property type="entry name" value="TRMA_2"/>
    <property type="match status" value="1"/>
</dbReference>